<gene>
    <name evidence="1" type="primary">ctaB</name>
    <name type="ordered locus">NGR_c05250</name>
</gene>
<organism>
    <name type="scientific">Sinorhizobium fredii (strain NBRC 101917 / NGR234)</name>
    <dbReference type="NCBI Taxonomy" id="394"/>
    <lineage>
        <taxon>Bacteria</taxon>
        <taxon>Pseudomonadati</taxon>
        <taxon>Pseudomonadota</taxon>
        <taxon>Alphaproteobacteria</taxon>
        <taxon>Hyphomicrobiales</taxon>
        <taxon>Rhizobiaceae</taxon>
        <taxon>Sinorhizobium/Ensifer group</taxon>
        <taxon>Sinorhizobium</taxon>
    </lineage>
</organism>
<name>COXX_SINFN</name>
<evidence type="ECO:0000255" key="1">
    <source>
        <dbReference type="HAMAP-Rule" id="MF_00154"/>
    </source>
</evidence>
<sequence>MTLIDNHEAVGMEGVPRLSEASARDYFELLKPRVMSLVVFTAFAGLVLAPGQINPVIGFIAILCIAIGAGASGALNMWYDADIDAVMSRTAKRPIPAGKILPQEALAFGLTLSAFSVIILGLAVNWLAAGLLAFTIFFYVVIYTMWLKRSTPQNIVIGGAAGAFPPMIGWACVTGGVSVESIVLFLIIFLWTPAHFWALALFKMGDYGAVGVPMMPNVCGEATTKRQIVVYALLTALSGICPTLLGFASLGYGAFATALGLGFIWYSLAVLRMPEADKRMLPAKKLFAFSIAYLFAIFSALLVDYMIAHVWLDAGGII</sequence>
<keyword id="KW-0997">Cell inner membrane</keyword>
<keyword id="KW-1003">Cell membrane</keyword>
<keyword id="KW-0350">Heme biosynthesis</keyword>
<keyword id="KW-0472">Membrane</keyword>
<keyword id="KW-1185">Reference proteome</keyword>
<keyword id="KW-0808">Transferase</keyword>
<keyword id="KW-0812">Transmembrane</keyword>
<keyword id="KW-1133">Transmembrane helix</keyword>
<comment type="function">
    <text evidence="1">Converts heme B (protoheme IX) to heme O by substitution of the vinyl group on carbon 2 of heme B porphyrin ring with a hydroxyethyl farnesyl side group.</text>
</comment>
<comment type="catalytic activity">
    <reaction evidence="1">
        <text>heme b + (2E,6E)-farnesyl diphosphate + H2O = Fe(II)-heme o + diphosphate</text>
        <dbReference type="Rhea" id="RHEA:28070"/>
        <dbReference type="ChEBI" id="CHEBI:15377"/>
        <dbReference type="ChEBI" id="CHEBI:33019"/>
        <dbReference type="ChEBI" id="CHEBI:60344"/>
        <dbReference type="ChEBI" id="CHEBI:60530"/>
        <dbReference type="ChEBI" id="CHEBI:175763"/>
        <dbReference type="EC" id="2.5.1.141"/>
    </reaction>
</comment>
<comment type="pathway">
    <text evidence="1">Porphyrin-containing compound metabolism; heme O biosynthesis; heme O from protoheme: step 1/1.</text>
</comment>
<comment type="subcellular location">
    <subcellularLocation>
        <location evidence="1">Cell inner membrane</location>
        <topology evidence="1">Multi-pass membrane protein</topology>
    </subcellularLocation>
</comment>
<comment type="miscellaneous">
    <text evidence="1">Carbon 2 of the heme B porphyrin ring is defined according to the Fischer nomenclature.</text>
</comment>
<comment type="similarity">
    <text evidence="1">Belongs to the UbiA prenyltransferase family. Protoheme IX farnesyltransferase subfamily.</text>
</comment>
<dbReference type="EC" id="2.5.1.141" evidence="1"/>
<dbReference type="EMBL" id="CP001389">
    <property type="protein sequence ID" value="ACP24321.1"/>
    <property type="molecule type" value="Genomic_DNA"/>
</dbReference>
<dbReference type="RefSeq" id="WP_012707106.1">
    <property type="nucleotide sequence ID" value="NC_012587.1"/>
</dbReference>
<dbReference type="RefSeq" id="YP_002825074.1">
    <property type="nucleotide sequence ID" value="NC_012587.1"/>
</dbReference>
<dbReference type="SMR" id="C3MHJ3"/>
<dbReference type="STRING" id="394.NGR_c05250"/>
<dbReference type="KEGG" id="rhi:NGR_c05250"/>
<dbReference type="PATRIC" id="fig|394.7.peg.3338"/>
<dbReference type="eggNOG" id="COG0109">
    <property type="taxonomic scope" value="Bacteria"/>
</dbReference>
<dbReference type="HOGENOM" id="CLU_029631_0_2_5"/>
<dbReference type="OrthoDB" id="9814417at2"/>
<dbReference type="UniPathway" id="UPA00834">
    <property type="reaction ID" value="UER00712"/>
</dbReference>
<dbReference type="Proteomes" id="UP000001054">
    <property type="component" value="Chromosome"/>
</dbReference>
<dbReference type="GO" id="GO:0005886">
    <property type="term" value="C:plasma membrane"/>
    <property type="evidence" value="ECO:0007669"/>
    <property type="project" value="UniProtKB-SubCell"/>
</dbReference>
<dbReference type="GO" id="GO:0008495">
    <property type="term" value="F:protoheme IX farnesyltransferase activity"/>
    <property type="evidence" value="ECO:0007669"/>
    <property type="project" value="UniProtKB-UniRule"/>
</dbReference>
<dbReference type="GO" id="GO:0048034">
    <property type="term" value="P:heme O biosynthetic process"/>
    <property type="evidence" value="ECO:0007669"/>
    <property type="project" value="UniProtKB-UniRule"/>
</dbReference>
<dbReference type="CDD" id="cd13957">
    <property type="entry name" value="PT_UbiA_Cox10"/>
    <property type="match status" value="1"/>
</dbReference>
<dbReference type="FunFam" id="1.10.357.140:FF:000001">
    <property type="entry name" value="Protoheme IX farnesyltransferase"/>
    <property type="match status" value="1"/>
</dbReference>
<dbReference type="Gene3D" id="1.10.357.140">
    <property type="entry name" value="UbiA prenyltransferase"/>
    <property type="match status" value="1"/>
</dbReference>
<dbReference type="HAMAP" id="MF_00154">
    <property type="entry name" value="CyoE_CtaB"/>
    <property type="match status" value="1"/>
</dbReference>
<dbReference type="InterPro" id="IPR006369">
    <property type="entry name" value="Protohaem_IX_farnesylTrfase"/>
</dbReference>
<dbReference type="InterPro" id="IPR000537">
    <property type="entry name" value="UbiA_prenyltransferase"/>
</dbReference>
<dbReference type="InterPro" id="IPR030470">
    <property type="entry name" value="UbiA_prenylTrfase_CS"/>
</dbReference>
<dbReference type="InterPro" id="IPR044878">
    <property type="entry name" value="UbiA_sf"/>
</dbReference>
<dbReference type="NCBIfam" id="TIGR01473">
    <property type="entry name" value="cyoE_ctaB"/>
    <property type="match status" value="1"/>
</dbReference>
<dbReference type="NCBIfam" id="NF003349">
    <property type="entry name" value="PRK04375.1-2"/>
    <property type="match status" value="1"/>
</dbReference>
<dbReference type="PANTHER" id="PTHR43448:SF7">
    <property type="entry name" value="4-HYDROXYBENZOATE SOLANESYLTRANSFERASE"/>
    <property type="match status" value="1"/>
</dbReference>
<dbReference type="PANTHER" id="PTHR43448">
    <property type="entry name" value="PROTOHEME IX FARNESYLTRANSFERASE, MITOCHONDRIAL"/>
    <property type="match status" value="1"/>
</dbReference>
<dbReference type="Pfam" id="PF01040">
    <property type="entry name" value="UbiA"/>
    <property type="match status" value="1"/>
</dbReference>
<dbReference type="PROSITE" id="PS00943">
    <property type="entry name" value="UBIA"/>
    <property type="match status" value="1"/>
</dbReference>
<protein>
    <recommendedName>
        <fullName evidence="1">Protoheme IX farnesyltransferase</fullName>
        <ecNumber evidence="1">2.5.1.141</ecNumber>
    </recommendedName>
    <alternativeName>
        <fullName evidence="1">Heme B farnesyltransferase</fullName>
    </alternativeName>
    <alternativeName>
        <fullName evidence="1">Heme O synthase</fullName>
    </alternativeName>
</protein>
<proteinExistence type="inferred from homology"/>
<accession>C3MHJ3</accession>
<reference key="1">
    <citation type="journal article" date="2009" name="Appl. Environ. Microbiol.">
        <title>Rhizobium sp. strain NGR234 possesses a remarkable number of secretion systems.</title>
        <authorList>
            <person name="Schmeisser C."/>
            <person name="Liesegang H."/>
            <person name="Krysciak D."/>
            <person name="Bakkou N."/>
            <person name="Le Quere A."/>
            <person name="Wollherr A."/>
            <person name="Heinemeyer I."/>
            <person name="Morgenstern B."/>
            <person name="Pommerening-Roeser A."/>
            <person name="Flores M."/>
            <person name="Palacios R."/>
            <person name="Brenner S."/>
            <person name="Gottschalk G."/>
            <person name="Schmitz R.A."/>
            <person name="Broughton W.J."/>
            <person name="Perret X."/>
            <person name="Strittmatter A.W."/>
            <person name="Streit W.R."/>
        </authorList>
    </citation>
    <scope>NUCLEOTIDE SEQUENCE [LARGE SCALE GENOMIC DNA]</scope>
    <source>
        <strain>NBRC 101917 / NGR234</strain>
    </source>
</reference>
<feature type="chain" id="PRO_1000199658" description="Protoheme IX farnesyltransferase">
    <location>
        <begin position="1"/>
        <end position="318"/>
    </location>
</feature>
<feature type="transmembrane region" description="Helical" evidence="1">
    <location>
        <begin position="34"/>
        <end position="54"/>
    </location>
</feature>
<feature type="transmembrane region" description="Helical" evidence="1">
    <location>
        <begin position="55"/>
        <end position="75"/>
    </location>
</feature>
<feature type="transmembrane region" description="Helical" evidence="1">
    <location>
        <begin position="95"/>
        <end position="115"/>
    </location>
</feature>
<feature type="transmembrane region" description="Helical" evidence="1">
    <location>
        <begin position="118"/>
        <end position="138"/>
    </location>
</feature>
<feature type="transmembrane region" description="Helical" evidence="1">
    <location>
        <begin position="155"/>
        <end position="175"/>
    </location>
</feature>
<feature type="transmembrane region" description="Helical" evidence="1">
    <location>
        <begin position="182"/>
        <end position="202"/>
    </location>
</feature>
<feature type="transmembrane region" description="Helical" evidence="1">
    <location>
        <begin position="228"/>
        <end position="250"/>
    </location>
</feature>
<feature type="transmembrane region" description="Helical" evidence="1">
    <location>
        <begin position="254"/>
        <end position="273"/>
    </location>
</feature>
<feature type="transmembrane region" description="Helical" evidence="1">
    <location>
        <begin position="287"/>
        <end position="307"/>
    </location>
</feature>